<keyword id="KW-0903">Direct protein sequencing</keyword>
<keyword id="KW-0382">Hypotensive agent</keyword>
<keyword id="KW-0481">Metalloenzyme inhibitor</keyword>
<keyword id="KW-0483">Metalloprotease inhibitor</keyword>
<keyword id="KW-0646">Protease inhibitor</keyword>
<keyword id="KW-0873">Pyrrolidone carboxylic acid</keyword>
<keyword id="KW-0964">Secreted</keyword>
<keyword id="KW-0800">Toxin</keyword>
<organism>
    <name type="scientific">Bothrops fonsecai</name>
    <name type="common">Fonseca's lancehead</name>
    <name type="synonym">Rhinocerophis fonsecai</name>
    <dbReference type="NCBI Taxonomy" id="157549"/>
    <lineage>
        <taxon>Eukaryota</taxon>
        <taxon>Metazoa</taxon>
        <taxon>Chordata</taxon>
        <taxon>Craniata</taxon>
        <taxon>Vertebrata</taxon>
        <taxon>Euteleostomi</taxon>
        <taxon>Lepidosauria</taxon>
        <taxon>Squamata</taxon>
        <taxon>Bifurcata</taxon>
        <taxon>Unidentata</taxon>
        <taxon>Episquamata</taxon>
        <taxon>Toxicofera</taxon>
        <taxon>Serpentes</taxon>
        <taxon>Colubroidea</taxon>
        <taxon>Viperidae</taxon>
        <taxon>Crotalinae</taxon>
        <taxon>Bothrops</taxon>
    </lineage>
</organism>
<reference key="1">
    <citation type="journal article" date="2012" name="Mol. Cell. Proteomics">
        <title>Peptidomics of three Bothrops snake venoms: insights into the molecular diversification of proteomes and peptidomes.</title>
        <authorList>
            <person name="Tashima A.K."/>
            <person name="Zelanis A."/>
            <person name="Kitano E.S."/>
            <person name="Ianzer D."/>
            <person name="Melo R.L."/>
            <person name="Rioli V."/>
            <person name="Sant'anna S.S."/>
            <person name="Schenberg A.C."/>
            <person name="Camargo A.C."/>
            <person name="Serrano S.M.T."/>
        </authorList>
    </citation>
    <scope>PROTEIN SEQUENCE</scope>
    <scope>FUNCTION</scope>
    <scope>PYROGLUTAMATE FORMATION AT GLN-1</scope>
    <scope>MASS SPECTROMETRY</scope>
    <source>
        <tissue>Venom</tissue>
    </source>
</reference>
<dbReference type="GO" id="GO:0005576">
    <property type="term" value="C:extracellular region"/>
    <property type="evidence" value="ECO:0007669"/>
    <property type="project" value="UniProtKB-SubCell"/>
</dbReference>
<dbReference type="GO" id="GO:0030414">
    <property type="term" value="F:peptidase inhibitor activity"/>
    <property type="evidence" value="ECO:0007669"/>
    <property type="project" value="UniProtKB-KW"/>
</dbReference>
<dbReference type="GO" id="GO:0090729">
    <property type="term" value="F:toxin activity"/>
    <property type="evidence" value="ECO:0007669"/>
    <property type="project" value="UniProtKB-KW"/>
</dbReference>
<dbReference type="GO" id="GO:0008217">
    <property type="term" value="P:regulation of blood pressure"/>
    <property type="evidence" value="ECO:0007669"/>
    <property type="project" value="UniProtKB-KW"/>
</dbReference>
<name>BPPBG_BOTFO</name>
<accession>P0DL00</accession>
<evidence type="ECO:0000250" key="1"/>
<evidence type="ECO:0000269" key="2">
    <source>
    </source>
</evidence>
<evidence type="ECO:0000305" key="3"/>
<sequence length="11" mass="1297">QARPRHPKIPP</sequence>
<proteinExistence type="evidence at protein level"/>
<comment type="function">
    <text evidence="1 2">This peptide both inhibits the activity of the angiotensin-converting enzyme (ACE) and enhances the action of bradykinin by inhibiting the peptidases that inactivate it. It acts as an indirect hypotensive agent (By similarity).</text>
</comment>
<comment type="subcellular location">
    <subcellularLocation>
        <location>Secreted</location>
    </subcellularLocation>
</comment>
<comment type="tissue specificity">
    <text>Expressed by the venom gland.</text>
</comment>
<comment type="mass spectrometry" mass="1278.6" method="Electrospray" evidence="2"/>
<comment type="similarity">
    <text evidence="3">Belongs to the bradykinin-potentiating peptide family.</text>
</comment>
<feature type="peptide" id="PRO_0000421913" description="Bradykinin-potentiating peptide 11g">
    <location>
        <begin position="1"/>
        <end position="11"/>
    </location>
</feature>
<feature type="modified residue" description="Pyrrolidone carboxylic acid" evidence="2">
    <location>
        <position position="1"/>
    </location>
</feature>
<feature type="unsure residue" description="K or Q">
    <location>
        <position position="8"/>
    </location>
</feature>
<feature type="unsure residue" description="I or L">
    <location>
        <position position="9"/>
    </location>
</feature>
<protein>
    <recommendedName>
        <fullName>Bradykinin-potentiating peptide 11g</fullName>
        <shortName>BPP-11g</shortName>
    </recommendedName>
</protein>